<name>DPO3B_STAEQ</name>
<protein>
    <recommendedName>
        <fullName>Beta sliding clamp</fullName>
        <shortName>Beta clamp</shortName>
        <shortName>Sliding clamp</shortName>
    </recommendedName>
    <alternativeName>
        <fullName>Beta-clamp processivity factor</fullName>
    </alternativeName>
    <alternativeName>
        <fullName>DNA polymerase III beta sliding clamp subunit</fullName>
    </alternativeName>
    <alternativeName>
        <fullName>DNA polymerase III subunit beta</fullName>
    </alternativeName>
</protein>
<comment type="function">
    <text evidence="1">Confers DNA tethering and processivity to DNA polymerases and other proteins. Acts as a clamp, forming a ring around DNA (a reaction catalyzed by the clamp-loading complex) which diffuses in an ATP-independent manner freely and bidirectionally along dsDNA. Initially characterized for its ability to contact the catalytic subunit of DNA polymerase III (Pol III), a complex, multichain enzyme responsible for most of the replicative synthesis in bacteria; Pol III exhibits 3'-5' exonuclease proofreading activity. The beta chain is required for initiation of replication as well as for processivity of DNA replication.</text>
</comment>
<comment type="subunit">
    <text evidence="1">Forms a ring-shaped head-to-tail homodimer around DNA which binds and tethers DNA polymerases and other proteins to the DNA. The DNA replisome complex has a single clamp-loading complex (3 tau and 1 each of delta, delta', psi and chi subunits) which binds 3 Pol III cores (1 core on the leading strand and 2 on the lagging strand) each with a beta sliding clamp dimer. Additional proteins in the replisome are other copies of gamma, psi and chi, Ssb, DNA helicase and RNA primase.</text>
</comment>
<comment type="subcellular location">
    <subcellularLocation>
        <location evidence="1">Cytoplasm</location>
    </subcellularLocation>
</comment>
<comment type="similarity">
    <text evidence="2">Belongs to the beta sliding clamp family.</text>
</comment>
<accession>Q5HK00</accession>
<organism>
    <name type="scientific">Staphylococcus epidermidis (strain ATCC 35984 / DSM 28319 / BCRC 17069 / CCUG 31568 / BM 3577 / RP62A)</name>
    <dbReference type="NCBI Taxonomy" id="176279"/>
    <lineage>
        <taxon>Bacteria</taxon>
        <taxon>Bacillati</taxon>
        <taxon>Bacillota</taxon>
        <taxon>Bacilli</taxon>
        <taxon>Bacillales</taxon>
        <taxon>Staphylococcaceae</taxon>
        <taxon>Staphylococcus</taxon>
    </lineage>
</organism>
<proteinExistence type="inferred from homology"/>
<feature type="chain" id="PRO_0000105470" description="Beta sliding clamp">
    <location>
        <begin position="1"/>
        <end position="377"/>
    </location>
</feature>
<keyword id="KW-0963">Cytoplasm</keyword>
<keyword id="KW-0235">DNA replication</keyword>
<keyword id="KW-0238">DNA-binding</keyword>
<keyword id="KW-0239">DNA-directed DNA polymerase</keyword>
<keyword id="KW-0548">Nucleotidyltransferase</keyword>
<keyword id="KW-1185">Reference proteome</keyword>
<keyword id="KW-0808">Transferase</keyword>
<sequence>MMEFTIKRDYFINQLNDTLKAISPRTTLPILTGIKIDAKENEVILTGSDSEISIEITIPKQVDGEEIVEITETGSVVLPGRFFVDIIKKLPGKEVKLSTNEQFQTLITSGHSEFNLSGLDPDQYPLLPEVSRDDAIQLSVKVLKNIIAQTNFAVSTSETRPVLTGVNWLIQDNELICTATDSHRLAVRKLQLEDESENKNVIIPGKALSELNKIMSDSDEDIDIFFASNQVLFRVGNINFISRLLEGHYPDTTRLFPENYEIKLGINNGDFYHAIDRASLLAREGGNNVIKLSTGNELVELSSTSPEIGTVKEEVNANDVEGGNLKISFNSKYMMDALKAIDNDEVEVEFFGTMKPFILKPKDDDSVTQLILPIRTY</sequence>
<gene>
    <name type="primary">dnaN</name>
    <name type="ordered locus">SERP2552</name>
</gene>
<evidence type="ECO:0000250" key="1">
    <source>
        <dbReference type="UniProtKB" id="P0A988"/>
    </source>
</evidence>
<evidence type="ECO:0000305" key="2"/>
<dbReference type="EMBL" id="CP000029">
    <property type="protein sequence ID" value="AAW53376.1"/>
    <property type="molecule type" value="Genomic_DNA"/>
</dbReference>
<dbReference type="RefSeq" id="WP_001831813.1">
    <property type="nucleotide sequence ID" value="NC_002976.3"/>
</dbReference>
<dbReference type="SMR" id="Q5HK00"/>
<dbReference type="STRING" id="176279.SERP2552"/>
<dbReference type="GeneID" id="50017416"/>
<dbReference type="KEGG" id="ser:SERP2552"/>
<dbReference type="eggNOG" id="COG0592">
    <property type="taxonomic scope" value="Bacteria"/>
</dbReference>
<dbReference type="HOGENOM" id="CLU_038149_2_0_9"/>
<dbReference type="Proteomes" id="UP000000531">
    <property type="component" value="Chromosome"/>
</dbReference>
<dbReference type="GO" id="GO:0005737">
    <property type="term" value="C:cytoplasm"/>
    <property type="evidence" value="ECO:0007669"/>
    <property type="project" value="UniProtKB-SubCell"/>
</dbReference>
<dbReference type="GO" id="GO:0009360">
    <property type="term" value="C:DNA polymerase III complex"/>
    <property type="evidence" value="ECO:0007669"/>
    <property type="project" value="InterPro"/>
</dbReference>
<dbReference type="GO" id="GO:0008408">
    <property type="term" value="F:3'-5' exonuclease activity"/>
    <property type="evidence" value="ECO:0007669"/>
    <property type="project" value="InterPro"/>
</dbReference>
<dbReference type="GO" id="GO:0003677">
    <property type="term" value="F:DNA binding"/>
    <property type="evidence" value="ECO:0007669"/>
    <property type="project" value="UniProtKB-KW"/>
</dbReference>
<dbReference type="GO" id="GO:0003887">
    <property type="term" value="F:DNA-directed DNA polymerase activity"/>
    <property type="evidence" value="ECO:0007669"/>
    <property type="project" value="UniProtKB-KW"/>
</dbReference>
<dbReference type="GO" id="GO:0006271">
    <property type="term" value="P:DNA strand elongation involved in DNA replication"/>
    <property type="evidence" value="ECO:0007669"/>
    <property type="project" value="TreeGrafter"/>
</dbReference>
<dbReference type="CDD" id="cd00140">
    <property type="entry name" value="beta_clamp"/>
    <property type="match status" value="1"/>
</dbReference>
<dbReference type="FunFam" id="3.10.150.10:FF:000007">
    <property type="entry name" value="Beta sliding clamp"/>
    <property type="match status" value="1"/>
</dbReference>
<dbReference type="Gene3D" id="3.70.10.10">
    <property type="match status" value="1"/>
</dbReference>
<dbReference type="Gene3D" id="3.10.150.10">
    <property type="entry name" value="DNA Polymerase III, subunit A, domain 2"/>
    <property type="match status" value="1"/>
</dbReference>
<dbReference type="InterPro" id="IPR046938">
    <property type="entry name" value="DNA_clamp_sf"/>
</dbReference>
<dbReference type="InterPro" id="IPR001001">
    <property type="entry name" value="DNA_polIII_beta"/>
</dbReference>
<dbReference type="InterPro" id="IPR022635">
    <property type="entry name" value="DNA_polIII_beta_C"/>
</dbReference>
<dbReference type="InterPro" id="IPR022637">
    <property type="entry name" value="DNA_polIII_beta_cen"/>
</dbReference>
<dbReference type="InterPro" id="IPR022634">
    <property type="entry name" value="DNA_polIII_beta_N"/>
</dbReference>
<dbReference type="NCBIfam" id="TIGR00663">
    <property type="entry name" value="dnan"/>
    <property type="match status" value="1"/>
</dbReference>
<dbReference type="PANTHER" id="PTHR30478:SF0">
    <property type="entry name" value="BETA SLIDING CLAMP"/>
    <property type="match status" value="1"/>
</dbReference>
<dbReference type="PANTHER" id="PTHR30478">
    <property type="entry name" value="DNA POLYMERASE III SUBUNIT BETA"/>
    <property type="match status" value="1"/>
</dbReference>
<dbReference type="Pfam" id="PF00712">
    <property type="entry name" value="DNA_pol3_beta"/>
    <property type="match status" value="1"/>
</dbReference>
<dbReference type="Pfam" id="PF02767">
    <property type="entry name" value="DNA_pol3_beta_2"/>
    <property type="match status" value="1"/>
</dbReference>
<dbReference type="Pfam" id="PF02768">
    <property type="entry name" value="DNA_pol3_beta_3"/>
    <property type="match status" value="1"/>
</dbReference>
<dbReference type="PIRSF" id="PIRSF000804">
    <property type="entry name" value="DNA_pol_III_b"/>
    <property type="match status" value="1"/>
</dbReference>
<dbReference type="SMART" id="SM00480">
    <property type="entry name" value="POL3Bc"/>
    <property type="match status" value="1"/>
</dbReference>
<dbReference type="SUPFAM" id="SSF55979">
    <property type="entry name" value="DNA clamp"/>
    <property type="match status" value="3"/>
</dbReference>
<reference key="1">
    <citation type="journal article" date="2005" name="J. Bacteriol.">
        <title>Insights on evolution of virulence and resistance from the complete genome analysis of an early methicillin-resistant Staphylococcus aureus strain and a biofilm-producing methicillin-resistant Staphylococcus epidermidis strain.</title>
        <authorList>
            <person name="Gill S.R."/>
            <person name="Fouts D.E."/>
            <person name="Archer G.L."/>
            <person name="Mongodin E.F."/>
            <person name="DeBoy R.T."/>
            <person name="Ravel J."/>
            <person name="Paulsen I.T."/>
            <person name="Kolonay J.F."/>
            <person name="Brinkac L.M."/>
            <person name="Beanan M.J."/>
            <person name="Dodson R.J."/>
            <person name="Daugherty S.C."/>
            <person name="Madupu R."/>
            <person name="Angiuoli S.V."/>
            <person name="Durkin A.S."/>
            <person name="Haft D.H."/>
            <person name="Vamathevan J.J."/>
            <person name="Khouri H."/>
            <person name="Utterback T.R."/>
            <person name="Lee C."/>
            <person name="Dimitrov G."/>
            <person name="Jiang L."/>
            <person name="Qin H."/>
            <person name="Weidman J."/>
            <person name="Tran K."/>
            <person name="Kang K.H."/>
            <person name="Hance I.R."/>
            <person name="Nelson K.E."/>
            <person name="Fraser C.M."/>
        </authorList>
    </citation>
    <scope>NUCLEOTIDE SEQUENCE [LARGE SCALE GENOMIC DNA]</scope>
    <source>
        <strain>ATCC 35984 / DSM 28319 / BCRC 17069 / CCUG 31568 / BM 3577 / RP62A</strain>
    </source>
</reference>